<reference key="1">
    <citation type="journal article" date="2007" name="PLoS ONE">
        <title>Analysis of the neurotoxin complex genes in Clostridium botulinum A1-A4 and B1 strains: BoNT/A3, /Ba4 and /B1 clusters are located within plasmids.</title>
        <authorList>
            <person name="Smith T.J."/>
            <person name="Hill K.K."/>
            <person name="Foley B.T."/>
            <person name="Detter J.C."/>
            <person name="Munk A.C."/>
            <person name="Bruce D.C."/>
            <person name="Doggett N.A."/>
            <person name="Smith L.A."/>
            <person name="Marks J.D."/>
            <person name="Xie G."/>
            <person name="Brettin T.S."/>
        </authorList>
    </citation>
    <scope>NUCLEOTIDE SEQUENCE [LARGE SCALE GENOMIC DNA]</scope>
    <source>
        <strain>ATCC 19397 / Type A</strain>
    </source>
</reference>
<accession>A7FVZ7</accession>
<name>RIMP_CLOB1</name>
<comment type="function">
    <text evidence="1">Required for maturation of 30S ribosomal subunits.</text>
</comment>
<comment type="subcellular location">
    <subcellularLocation>
        <location evidence="1">Cytoplasm</location>
    </subcellularLocation>
</comment>
<comment type="similarity">
    <text evidence="1">Belongs to the RimP family.</text>
</comment>
<proteinExistence type="inferred from homology"/>
<sequence length="153" mass="17821">MSKHSLIENLKEQIEPIAEGLDYELYHIEFVKEGKENYLRIYIDSENGVSLEGCEKVSRAISELLDDIDPIQESYYLEVSSPGIDRVLYTDKHLEKYKSYNIVLNLYSPIDKKKKYEGELVDFNENEIDIKVEENIVTIPREKISKTTLKGEL</sequence>
<dbReference type="EMBL" id="CP000726">
    <property type="protein sequence ID" value="ABS35269.1"/>
    <property type="molecule type" value="Genomic_DNA"/>
</dbReference>
<dbReference type="RefSeq" id="WP_011986793.1">
    <property type="nucleotide sequence ID" value="NC_009697.1"/>
</dbReference>
<dbReference type="SMR" id="A7FVZ7"/>
<dbReference type="GeneID" id="5187192"/>
<dbReference type="KEGG" id="cba:CLB_2286"/>
<dbReference type="HOGENOM" id="CLU_070525_2_0_9"/>
<dbReference type="GO" id="GO:0005829">
    <property type="term" value="C:cytosol"/>
    <property type="evidence" value="ECO:0007669"/>
    <property type="project" value="TreeGrafter"/>
</dbReference>
<dbReference type="GO" id="GO:0000028">
    <property type="term" value="P:ribosomal small subunit assembly"/>
    <property type="evidence" value="ECO:0007669"/>
    <property type="project" value="TreeGrafter"/>
</dbReference>
<dbReference type="GO" id="GO:0006412">
    <property type="term" value="P:translation"/>
    <property type="evidence" value="ECO:0007669"/>
    <property type="project" value="TreeGrafter"/>
</dbReference>
<dbReference type="CDD" id="cd01734">
    <property type="entry name" value="YlxS_C"/>
    <property type="match status" value="1"/>
</dbReference>
<dbReference type="FunFam" id="2.30.30.180:FF:000007">
    <property type="entry name" value="Ribosome maturation factor RimP"/>
    <property type="match status" value="1"/>
</dbReference>
<dbReference type="FunFam" id="3.30.300.70:FF:000001">
    <property type="entry name" value="Ribosome maturation factor RimP"/>
    <property type="match status" value="1"/>
</dbReference>
<dbReference type="Gene3D" id="2.30.30.180">
    <property type="entry name" value="Ribosome maturation factor RimP, C-terminal domain"/>
    <property type="match status" value="1"/>
</dbReference>
<dbReference type="Gene3D" id="3.30.300.70">
    <property type="entry name" value="RimP-like superfamily, N-terminal"/>
    <property type="match status" value="1"/>
</dbReference>
<dbReference type="HAMAP" id="MF_01077">
    <property type="entry name" value="RimP"/>
    <property type="match status" value="1"/>
</dbReference>
<dbReference type="InterPro" id="IPR003728">
    <property type="entry name" value="Ribosome_maturation_RimP"/>
</dbReference>
<dbReference type="InterPro" id="IPR028998">
    <property type="entry name" value="RimP_C"/>
</dbReference>
<dbReference type="InterPro" id="IPR036847">
    <property type="entry name" value="RimP_C_sf"/>
</dbReference>
<dbReference type="InterPro" id="IPR028989">
    <property type="entry name" value="RimP_N"/>
</dbReference>
<dbReference type="InterPro" id="IPR035956">
    <property type="entry name" value="RimP_N_sf"/>
</dbReference>
<dbReference type="NCBIfam" id="NF000934">
    <property type="entry name" value="PRK00092.3-1"/>
    <property type="match status" value="1"/>
</dbReference>
<dbReference type="PANTHER" id="PTHR33867">
    <property type="entry name" value="RIBOSOME MATURATION FACTOR RIMP"/>
    <property type="match status" value="1"/>
</dbReference>
<dbReference type="PANTHER" id="PTHR33867:SF1">
    <property type="entry name" value="RIBOSOME MATURATION FACTOR RIMP"/>
    <property type="match status" value="1"/>
</dbReference>
<dbReference type="Pfam" id="PF17384">
    <property type="entry name" value="DUF150_C"/>
    <property type="match status" value="1"/>
</dbReference>
<dbReference type="Pfam" id="PF02576">
    <property type="entry name" value="RimP_N"/>
    <property type="match status" value="1"/>
</dbReference>
<dbReference type="SUPFAM" id="SSF74942">
    <property type="entry name" value="YhbC-like, C-terminal domain"/>
    <property type="match status" value="1"/>
</dbReference>
<dbReference type="SUPFAM" id="SSF75420">
    <property type="entry name" value="YhbC-like, N-terminal domain"/>
    <property type="match status" value="1"/>
</dbReference>
<evidence type="ECO:0000255" key="1">
    <source>
        <dbReference type="HAMAP-Rule" id="MF_01077"/>
    </source>
</evidence>
<keyword id="KW-0963">Cytoplasm</keyword>
<keyword id="KW-0690">Ribosome biogenesis</keyword>
<gene>
    <name evidence="1" type="primary">rimP</name>
    <name type="ordered locus">CLB_2286</name>
</gene>
<organism>
    <name type="scientific">Clostridium botulinum (strain ATCC 19397 / Type A)</name>
    <dbReference type="NCBI Taxonomy" id="441770"/>
    <lineage>
        <taxon>Bacteria</taxon>
        <taxon>Bacillati</taxon>
        <taxon>Bacillota</taxon>
        <taxon>Clostridia</taxon>
        <taxon>Eubacteriales</taxon>
        <taxon>Clostridiaceae</taxon>
        <taxon>Clostridium</taxon>
    </lineage>
</organism>
<protein>
    <recommendedName>
        <fullName evidence="1">Ribosome maturation factor RimP</fullName>
    </recommendedName>
</protein>
<feature type="chain" id="PRO_1000064702" description="Ribosome maturation factor RimP">
    <location>
        <begin position="1"/>
        <end position="153"/>
    </location>
</feature>